<name>MURC_STRPC</name>
<organism>
    <name type="scientific">Streptococcus pyogenes serotype M12 (strain MGAS9429)</name>
    <dbReference type="NCBI Taxonomy" id="370551"/>
    <lineage>
        <taxon>Bacteria</taxon>
        <taxon>Bacillati</taxon>
        <taxon>Bacillota</taxon>
        <taxon>Bacilli</taxon>
        <taxon>Lactobacillales</taxon>
        <taxon>Streptococcaceae</taxon>
        <taxon>Streptococcus</taxon>
    </lineage>
</organism>
<gene>
    <name evidence="1" type="primary">murC</name>
    <name type="ordered locus">MGAS9429_Spy0290</name>
</gene>
<sequence>MSKTYHFIGIKGSGMSALALMLHQMGHKVQGSDVEKYYFTQRGLEQAGITILPFSEDNITPDMELIVGNAFRENNKEVAYALRHQIPFKRYHDFLGDFMKSFISFAVAGAHGKTSTTGLLSHVLKNITDTSYLIGDGTGRGSANAQYFVFESDEYERHFMPYHPEYSIITNIDFDHPDYFTGIADVRNAFNDYAKQVKKALFVYGEDDELKKIEAPAPIYYYGFEEGNDFIAYDITRTTNGSDFKVKHQGEVIGQFHVPAYGKHNILNATAVIANLFVAGIDMALVADHLKTFSGVKRRFTEKIINDTIIIDDFAHHPTEIVATIDAARQKYPSKEIVAIFQPHTFTRTIALLEDFACALNEADSVYLAQIYGSAREVDKGEVKVEDLAAKIIKPSQVVTVENVSPLLDHDNAVYVFMGAGDIQLYEHSFEELLANLTKNNQ</sequence>
<protein>
    <recommendedName>
        <fullName evidence="1">UDP-N-acetylmuramate--L-alanine ligase</fullName>
        <ecNumber evidence="1">6.3.2.8</ecNumber>
    </recommendedName>
    <alternativeName>
        <fullName evidence="1">UDP-N-acetylmuramoyl-L-alanine synthetase</fullName>
    </alternativeName>
</protein>
<comment type="function">
    <text evidence="1">Cell wall formation.</text>
</comment>
<comment type="catalytic activity">
    <reaction evidence="1">
        <text>UDP-N-acetyl-alpha-D-muramate + L-alanine + ATP = UDP-N-acetyl-alpha-D-muramoyl-L-alanine + ADP + phosphate + H(+)</text>
        <dbReference type="Rhea" id="RHEA:23372"/>
        <dbReference type="ChEBI" id="CHEBI:15378"/>
        <dbReference type="ChEBI" id="CHEBI:30616"/>
        <dbReference type="ChEBI" id="CHEBI:43474"/>
        <dbReference type="ChEBI" id="CHEBI:57972"/>
        <dbReference type="ChEBI" id="CHEBI:70757"/>
        <dbReference type="ChEBI" id="CHEBI:83898"/>
        <dbReference type="ChEBI" id="CHEBI:456216"/>
        <dbReference type="EC" id="6.3.2.8"/>
    </reaction>
</comment>
<comment type="pathway">
    <text evidence="1">Cell wall biogenesis; peptidoglycan biosynthesis.</text>
</comment>
<comment type="subcellular location">
    <subcellularLocation>
        <location evidence="1">Cytoplasm</location>
    </subcellularLocation>
</comment>
<comment type="similarity">
    <text evidence="1">Belongs to the MurCDEF family.</text>
</comment>
<evidence type="ECO:0000255" key="1">
    <source>
        <dbReference type="HAMAP-Rule" id="MF_00046"/>
    </source>
</evidence>
<keyword id="KW-0067">ATP-binding</keyword>
<keyword id="KW-0131">Cell cycle</keyword>
<keyword id="KW-0132">Cell division</keyword>
<keyword id="KW-0133">Cell shape</keyword>
<keyword id="KW-0961">Cell wall biogenesis/degradation</keyword>
<keyword id="KW-0963">Cytoplasm</keyword>
<keyword id="KW-0436">Ligase</keyword>
<keyword id="KW-0547">Nucleotide-binding</keyword>
<keyword id="KW-0573">Peptidoglycan synthesis</keyword>
<feature type="chain" id="PRO_1000004422" description="UDP-N-acetylmuramate--L-alanine ligase">
    <location>
        <begin position="1"/>
        <end position="442"/>
    </location>
</feature>
<feature type="binding site" evidence="1">
    <location>
        <begin position="109"/>
        <end position="115"/>
    </location>
    <ligand>
        <name>ATP</name>
        <dbReference type="ChEBI" id="CHEBI:30616"/>
    </ligand>
</feature>
<reference key="1">
    <citation type="journal article" date="2006" name="Proc. Natl. Acad. Sci. U.S.A.">
        <title>Molecular genetic anatomy of inter- and intraserotype variation in the human bacterial pathogen group A Streptococcus.</title>
        <authorList>
            <person name="Beres S.B."/>
            <person name="Richter E.W."/>
            <person name="Nagiec M.J."/>
            <person name="Sumby P."/>
            <person name="Porcella S.F."/>
            <person name="DeLeo F.R."/>
            <person name="Musser J.M."/>
        </authorList>
    </citation>
    <scope>NUCLEOTIDE SEQUENCE [LARGE SCALE GENOMIC DNA]</scope>
    <source>
        <strain>MGAS9429</strain>
    </source>
</reference>
<dbReference type="EC" id="6.3.2.8" evidence="1"/>
<dbReference type="EMBL" id="CP000259">
    <property type="protein sequence ID" value="ABF31478.1"/>
    <property type="molecule type" value="Genomic_DNA"/>
</dbReference>
<dbReference type="RefSeq" id="WP_002991005.1">
    <property type="nucleotide sequence ID" value="NC_008021.1"/>
</dbReference>
<dbReference type="SMR" id="Q1JNC1"/>
<dbReference type="KEGG" id="spk:MGAS9429_Spy0290"/>
<dbReference type="HOGENOM" id="CLU_028104_1_0_9"/>
<dbReference type="UniPathway" id="UPA00219"/>
<dbReference type="Proteomes" id="UP000002433">
    <property type="component" value="Chromosome"/>
</dbReference>
<dbReference type="GO" id="GO:0005737">
    <property type="term" value="C:cytoplasm"/>
    <property type="evidence" value="ECO:0007669"/>
    <property type="project" value="UniProtKB-SubCell"/>
</dbReference>
<dbReference type="GO" id="GO:0005524">
    <property type="term" value="F:ATP binding"/>
    <property type="evidence" value="ECO:0007669"/>
    <property type="project" value="UniProtKB-UniRule"/>
</dbReference>
<dbReference type="GO" id="GO:0008763">
    <property type="term" value="F:UDP-N-acetylmuramate-L-alanine ligase activity"/>
    <property type="evidence" value="ECO:0007669"/>
    <property type="project" value="UniProtKB-UniRule"/>
</dbReference>
<dbReference type="GO" id="GO:0051301">
    <property type="term" value="P:cell division"/>
    <property type="evidence" value="ECO:0007669"/>
    <property type="project" value="UniProtKB-KW"/>
</dbReference>
<dbReference type="GO" id="GO:0071555">
    <property type="term" value="P:cell wall organization"/>
    <property type="evidence" value="ECO:0007669"/>
    <property type="project" value="UniProtKB-KW"/>
</dbReference>
<dbReference type="GO" id="GO:0009252">
    <property type="term" value="P:peptidoglycan biosynthetic process"/>
    <property type="evidence" value="ECO:0007669"/>
    <property type="project" value="UniProtKB-UniRule"/>
</dbReference>
<dbReference type="GO" id="GO:0008360">
    <property type="term" value="P:regulation of cell shape"/>
    <property type="evidence" value="ECO:0007669"/>
    <property type="project" value="UniProtKB-KW"/>
</dbReference>
<dbReference type="Gene3D" id="3.90.190.20">
    <property type="entry name" value="Mur ligase, C-terminal domain"/>
    <property type="match status" value="1"/>
</dbReference>
<dbReference type="Gene3D" id="3.40.1190.10">
    <property type="entry name" value="Mur-like, catalytic domain"/>
    <property type="match status" value="1"/>
</dbReference>
<dbReference type="Gene3D" id="3.40.50.720">
    <property type="entry name" value="NAD(P)-binding Rossmann-like Domain"/>
    <property type="match status" value="1"/>
</dbReference>
<dbReference type="HAMAP" id="MF_00046">
    <property type="entry name" value="MurC"/>
    <property type="match status" value="1"/>
</dbReference>
<dbReference type="InterPro" id="IPR036565">
    <property type="entry name" value="Mur-like_cat_sf"/>
</dbReference>
<dbReference type="InterPro" id="IPR004101">
    <property type="entry name" value="Mur_ligase_C"/>
</dbReference>
<dbReference type="InterPro" id="IPR036615">
    <property type="entry name" value="Mur_ligase_C_dom_sf"/>
</dbReference>
<dbReference type="InterPro" id="IPR013221">
    <property type="entry name" value="Mur_ligase_cen"/>
</dbReference>
<dbReference type="InterPro" id="IPR000713">
    <property type="entry name" value="Mur_ligase_N"/>
</dbReference>
<dbReference type="InterPro" id="IPR050061">
    <property type="entry name" value="MurCDEF_pg_biosynth"/>
</dbReference>
<dbReference type="InterPro" id="IPR005758">
    <property type="entry name" value="UDP-N-AcMur_Ala_ligase_MurC"/>
</dbReference>
<dbReference type="NCBIfam" id="TIGR01082">
    <property type="entry name" value="murC"/>
    <property type="match status" value="1"/>
</dbReference>
<dbReference type="PANTHER" id="PTHR43445:SF3">
    <property type="entry name" value="UDP-N-ACETYLMURAMATE--L-ALANINE LIGASE"/>
    <property type="match status" value="1"/>
</dbReference>
<dbReference type="PANTHER" id="PTHR43445">
    <property type="entry name" value="UDP-N-ACETYLMURAMATE--L-ALANINE LIGASE-RELATED"/>
    <property type="match status" value="1"/>
</dbReference>
<dbReference type="Pfam" id="PF01225">
    <property type="entry name" value="Mur_ligase"/>
    <property type="match status" value="1"/>
</dbReference>
<dbReference type="Pfam" id="PF02875">
    <property type="entry name" value="Mur_ligase_C"/>
    <property type="match status" value="1"/>
</dbReference>
<dbReference type="Pfam" id="PF08245">
    <property type="entry name" value="Mur_ligase_M"/>
    <property type="match status" value="1"/>
</dbReference>
<dbReference type="SUPFAM" id="SSF51984">
    <property type="entry name" value="MurCD N-terminal domain"/>
    <property type="match status" value="1"/>
</dbReference>
<dbReference type="SUPFAM" id="SSF53623">
    <property type="entry name" value="MurD-like peptide ligases, catalytic domain"/>
    <property type="match status" value="1"/>
</dbReference>
<dbReference type="SUPFAM" id="SSF53244">
    <property type="entry name" value="MurD-like peptide ligases, peptide-binding domain"/>
    <property type="match status" value="1"/>
</dbReference>
<proteinExistence type="inferred from homology"/>
<accession>Q1JNC1</accession>